<evidence type="ECO:0000250" key="1">
    <source>
        <dbReference type="UniProtKB" id="Q5VSB5"/>
    </source>
</evidence>
<evidence type="ECO:0000255" key="2"/>
<evidence type="ECO:0000269" key="3">
    <source>
    </source>
</evidence>
<evidence type="ECO:0000303" key="4">
    <source>
    </source>
</evidence>
<evidence type="ECO:0000305" key="5"/>
<evidence type="ECO:0000312" key="6">
    <source>
        <dbReference type="EMBL" id="BAD67659.1"/>
    </source>
</evidence>
<evidence type="ECO:0000312" key="7">
    <source>
        <dbReference type="EMBL" id="BAS96110.1"/>
    </source>
</evidence>
<protein>
    <recommendedName>
        <fullName evidence="4">Protein CADMIUM TOLERANCE 2</fullName>
        <shortName evidence="4">Cd tolerant 2</shortName>
        <shortName evidence="4">OsCDT2</shortName>
    </recommendedName>
</protein>
<comment type="function">
    <text evidence="1">Confers resistance to heavy metal ions (e.g. cadmium (CdCl(2)) and copper (CuCl(2))) by chelating them at the plasma membrane of root cells, thus stopping their entry and reducing their accumulation.</text>
</comment>
<comment type="subcellular location">
    <subcellularLocation>
        <location evidence="1">Cell membrane</location>
        <topology evidence="2">Single-pass membrane protein</topology>
    </subcellularLocation>
    <subcellularLocation>
        <location evidence="1">Secreted</location>
        <location evidence="1">Cell wall</location>
    </subcellularLocation>
</comment>
<comment type="tissue specificity">
    <text evidence="3">Expressed only in roots.</text>
</comment>
<comment type="induction">
    <text evidence="3">Down-regulated in root tissues but up-regulated in shoot tissues in response to cadmium (CdCl(2)).</text>
</comment>
<comment type="similarity">
    <text evidence="5">Belongs to the CYSTM1 family.</text>
</comment>
<accession>Q5VSB6</accession>
<accession>A0A0P0WSC5</accession>
<feature type="chain" id="PRO_0000454815" description="Protein CADMIUM TOLERANCE 2">
    <location>
        <begin position="1"/>
        <end position="55"/>
    </location>
</feature>
<feature type="transmembrane region" description="Helical" evidence="2">
    <location>
        <begin position="24"/>
        <end position="40"/>
    </location>
</feature>
<organism>
    <name type="scientific">Oryza sativa subsp. japonica</name>
    <name type="common">Rice</name>
    <dbReference type="NCBI Taxonomy" id="39947"/>
    <lineage>
        <taxon>Eukaryota</taxon>
        <taxon>Viridiplantae</taxon>
        <taxon>Streptophyta</taxon>
        <taxon>Embryophyta</taxon>
        <taxon>Tracheophyta</taxon>
        <taxon>Spermatophyta</taxon>
        <taxon>Magnoliopsida</taxon>
        <taxon>Liliopsida</taxon>
        <taxon>Poales</taxon>
        <taxon>Poaceae</taxon>
        <taxon>BOP clade</taxon>
        <taxon>Oryzoideae</taxon>
        <taxon>Oryzeae</taxon>
        <taxon>Oryzinae</taxon>
        <taxon>Oryza</taxon>
        <taxon>Oryza sativa</taxon>
    </lineage>
</organism>
<reference key="1">
    <citation type="journal article" date="2005" name="Nature">
        <title>The map-based sequence of the rice genome.</title>
        <authorList>
            <consortium name="International rice genome sequencing project (IRGSP)"/>
        </authorList>
    </citation>
    <scope>NUCLEOTIDE SEQUENCE [LARGE SCALE GENOMIC DNA]</scope>
    <source>
        <strain>cv. Nipponbare</strain>
    </source>
</reference>
<reference key="2">
    <citation type="journal article" date="2008" name="Nucleic Acids Res.">
        <title>The rice annotation project database (RAP-DB): 2008 update.</title>
        <authorList>
            <consortium name="The rice annotation project (RAP)"/>
        </authorList>
    </citation>
    <scope>GENOME REANNOTATION</scope>
    <source>
        <strain>cv. Nipponbare</strain>
    </source>
</reference>
<reference key="3">
    <citation type="journal article" date="2013" name="Rice">
        <title>Improvement of the Oryza sativa Nipponbare reference genome using next generation sequence and optical map data.</title>
        <authorList>
            <person name="Kawahara Y."/>
            <person name="de la Bastide M."/>
            <person name="Hamilton J.P."/>
            <person name="Kanamori H."/>
            <person name="McCombie W.R."/>
            <person name="Ouyang S."/>
            <person name="Schwartz D.C."/>
            <person name="Tanaka T."/>
            <person name="Wu J."/>
            <person name="Zhou S."/>
            <person name="Childs K.L."/>
            <person name="Davidson R.M."/>
            <person name="Lin H."/>
            <person name="Quesada-Ocampo L."/>
            <person name="Vaillancourt B."/>
            <person name="Sakai H."/>
            <person name="Lee S.S."/>
            <person name="Kim J."/>
            <person name="Numa H."/>
            <person name="Itoh T."/>
            <person name="Buell C.R."/>
            <person name="Matsumoto T."/>
        </authorList>
    </citation>
    <scope>GENOME REANNOTATION</scope>
    <source>
        <strain>cv. Nipponbare</strain>
    </source>
</reference>
<reference key="4">
    <citation type="journal article" date="2003" name="Science">
        <title>Collection, mapping, and annotation of over 28,000 cDNA clones from japonica rice.</title>
        <authorList>
            <consortium name="The rice full-length cDNA consortium"/>
        </authorList>
    </citation>
    <scope>NUCLEOTIDE SEQUENCE [LARGE SCALE MRNA]</scope>
    <source>
        <strain>cv. Nipponbare</strain>
    </source>
</reference>
<reference key="5">
    <citation type="journal article" date="2009" name="Plant Cell Physiol.">
        <title>Novel cysteine-rich peptides from Digitaria ciliaris and Oryza sativa enhance tolerance to cadmium by limiting its cellular accumulation.</title>
        <authorList>
            <person name="Kuramata M."/>
            <person name="Masuya S."/>
            <person name="Takahashi Y."/>
            <person name="Kitagawa E."/>
            <person name="Inoue C."/>
            <person name="Ishikawa S."/>
            <person name="Youssefian S."/>
            <person name="Kusano T."/>
        </authorList>
    </citation>
    <scope>TISSUE SPECIFICITY</scope>
    <scope>INDUCTION BY CADMIUM</scope>
    <scope>GENE FAMILY</scope>
    <scope>NOMENCLATURE</scope>
</reference>
<reference key="6">
    <citation type="journal article" date="2009" name="Plant Signal. Behav.">
        <title>A novel plant cysteine-rich peptide family conferring cadmium tolerance to yeast and plants.</title>
        <authorList>
            <person name="Matsuda T."/>
            <person name="Kuramata M."/>
            <person name="Takahashi Y."/>
            <person name="Kitagawa E."/>
            <person name="Youssefian S."/>
            <person name="Kusano T."/>
        </authorList>
    </citation>
    <scope>GENE FAMILY</scope>
</reference>
<proteinExistence type="evidence at transcript level"/>
<sequence length="55" mass="6391">MYNPPAQQDMSYYDHCTKRHEEKGCLYACIFTALCCFCCYETCECCLDCLCCCCN</sequence>
<gene>
    <name evidence="4" type="primary">CDT2</name>
    <name evidence="7" type="ordered locus">Os06g0143100</name>
    <name evidence="7" type="ORF">OSNPB_060143100</name>
    <name evidence="6" type="ORF">P0535G04.32-1</name>
</gene>
<keyword id="KW-1003">Cell membrane</keyword>
<keyword id="KW-0134">Cell wall</keyword>
<keyword id="KW-0472">Membrane</keyword>
<keyword id="KW-0479">Metal-binding</keyword>
<keyword id="KW-1185">Reference proteome</keyword>
<keyword id="KW-0964">Secreted</keyword>
<keyword id="KW-0346">Stress response</keyword>
<keyword id="KW-0812">Transmembrane</keyword>
<keyword id="KW-1133">Transmembrane helix</keyword>
<dbReference type="EMBL" id="AP000399">
    <property type="protein sequence ID" value="BAD67659.1"/>
    <property type="molecule type" value="Genomic_DNA"/>
</dbReference>
<dbReference type="EMBL" id="AP008212">
    <property type="protein sequence ID" value="BAH93323.1"/>
    <property type="molecule type" value="Genomic_DNA"/>
</dbReference>
<dbReference type="EMBL" id="AP014962">
    <property type="protein sequence ID" value="BAS96110.1"/>
    <property type="molecule type" value="Genomic_DNA"/>
</dbReference>
<dbReference type="EMBL" id="AK061597">
    <property type="protein sequence ID" value="BAG88031.1"/>
    <property type="molecule type" value="mRNA"/>
</dbReference>
<dbReference type="FunCoup" id="Q5VSB6">
    <property type="interactions" value="2"/>
</dbReference>
<dbReference type="EnsemblPlants" id="Os06t0143100-01">
    <property type="protein sequence ID" value="Os06t0143100-01"/>
    <property type="gene ID" value="Os06g0143100"/>
</dbReference>
<dbReference type="Gramene" id="Os06t0143100-01">
    <property type="protein sequence ID" value="Os06t0143100-01"/>
    <property type="gene ID" value="Os06g0143100"/>
</dbReference>
<dbReference type="KEGG" id="dosa:Os06g0143100"/>
<dbReference type="InParanoid" id="Q5VSB6"/>
<dbReference type="OMA" id="ICCCNCA"/>
<dbReference type="Proteomes" id="UP000000763">
    <property type="component" value="Chromosome 6"/>
</dbReference>
<dbReference type="Proteomes" id="UP000059680">
    <property type="component" value="Chromosome 6"/>
</dbReference>
<dbReference type="ExpressionAtlas" id="Q5VSB6">
    <property type="expression patterns" value="baseline and differential"/>
</dbReference>
<dbReference type="GO" id="GO:0005576">
    <property type="term" value="C:extracellular region"/>
    <property type="evidence" value="ECO:0007669"/>
    <property type="project" value="UniProtKB-KW"/>
</dbReference>
<dbReference type="GO" id="GO:0009505">
    <property type="term" value="C:plant-type cell wall"/>
    <property type="evidence" value="ECO:0000250"/>
    <property type="project" value="UniProtKB"/>
</dbReference>
<dbReference type="GO" id="GO:0005886">
    <property type="term" value="C:plasma membrane"/>
    <property type="evidence" value="ECO:0000250"/>
    <property type="project" value="UniProtKB"/>
</dbReference>
<dbReference type="GO" id="GO:0046872">
    <property type="term" value="F:metal ion binding"/>
    <property type="evidence" value="ECO:0000250"/>
    <property type="project" value="UniProtKB"/>
</dbReference>
<dbReference type="GO" id="GO:0140487">
    <property type="term" value="F:metal ion sequestering activity"/>
    <property type="evidence" value="ECO:0000250"/>
    <property type="project" value="UniProtKB"/>
</dbReference>
<dbReference type="GO" id="GO:1990748">
    <property type="term" value="P:cellular detoxification"/>
    <property type="evidence" value="ECO:0000250"/>
    <property type="project" value="UniProtKB"/>
</dbReference>
<dbReference type="GO" id="GO:0071585">
    <property type="term" value="P:detoxification of cadmium ion"/>
    <property type="evidence" value="ECO:0000250"/>
    <property type="project" value="UniProtKB"/>
</dbReference>
<dbReference type="GO" id="GO:0010273">
    <property type="term" value="P:detoxification of copper ion"/>
    <property type="evidence" value="ECO:0000250"/>
    <property type="project" value="UniProtKB"/>
</dbReference>
<dbReference type="GO" id="GO:0046686">
    <property type="term" value="P:response to cadmium ion"/>
    <property type="evidence" value="ECO:0000270"/>
    <property type="project" value="UniProtKB"/>
</dbReference>
<dbReference type="InterPro" id="IPR051671">
    <property type="entry name" value="CYSTM1_HM_Tolerance"/>
</dbReference>
<dbReference type="InterPro" id="IPR028144">
    <property type="entry name" value="CYSTM_dom"/>
</dbReference>
<dbReference type="PANTHER" id="PTHR35470">
    <property type="entry name" value="CADMIUM TOLERANT 3"/>
    <property type="match status" value="1"/>
</dbReference>
<dbReference type="PANTHER" id="PTHR35470:SF12">
    <property type="entry name" value="PROTEIN CADMIUM TOLERANCE 1"/>
    <property type="match status" value="1"/>
</dbReference>
<dbReference type="Pfam" id="PF12734">
    <property type="entry name" value="CYSTM"/>
    <property type="match status" value="1"/>
</dbReference>
<name>CDT2_ORYSJ</name>